<sequence>MRTQVLFLVLEVAAMASGDDTPHVYCGRRLAIMLSYLCDNQYLMKRTPYTSSESEGYGWRWLAPQRARQLAGARGKRQGIAEECCNKPCTEDELLGYC</sequence>
<organism>
    <name type="scientific">Samia cynthia</name>
    <name type="common">Ailanthus silkmoth</name>
    <name type="synonym">Phalaena cynthia</name>
    <dbReference type="NCBI Taxonomy" id="7127"/>
    <lineage>
        <taxon>Eukaryota</taxon>
        <taxon>Metazoa</taxon>
        <taxon>Ecdysozoa</taxon>
        <taxon>Arthropoda</taxon>
        <taxon>Hexapoda</taxon>
        <taxon>Insecta</taxon>
        <taxon>Pterygota</taxon>
        <taxon>Neoptera</taxon>
        <taxon>Endopterygota</taxon>
        <taxon>Lepidoptera</taxon>
        <taxon>Glossata</taxon>
        <taxon>Ditrysia</taxon>
        <taxon>Bombycoidea</taxon>
        <taxon>Saturniidae</taxon>
        <taxon>Saturniinae</taxon>
        <taxon>Attacini</taxon>
        <taxon>Samia</taxon>
    </lineage>
</organism>
<keyword id="KW-0165">Cleavage on pair of basic residues</keyword>
<keyword id="KW-1015">Disulfide bond</keyword>
<keyword id="KW-0372">Hormone</keyword>
<keyword id="KW-0964">Secreted</keyword>
<keyword id="KW-0732">Signal</keyword>
<dbReference type="EMBL" id="D13925">
    <property type="protein sequence ID" value="BAA03023.1"/>
    <property type="molecule type" value="Genomic_DNA"/>
</dbReference>
<dbReference type="PIR" id="JQ0906">
    <property type="entry name" value="JQ0906"/>
</dbReference>
<dbReference type="GO" id="GO:0005615">
    <property type="term" value="C:extracellular space"/>
    <property type="evidence" value="ECO:0007669"/>
    <property type="project" value="InterPro"/>
</dbReference>
<dbReference type="GO" id="GO:0008083">
    <property type="term" value="F:growth factor activity"/>
    <property type="evidence" value="ECO:0007669"/>
    <property type="project" value="InterPro"/>
</dbReference>
<dbReference type="GO" id="GO:0005179">
    <property type="term" value="F:hormone activity"/>
    <property type="evidence" value="ECO:0007669"/>
    <property type="project" value="UniProtKB-KW"/>
</dbReference>
<dbReference type="CDD" id="cd04366">
    <property type="entry name" value="IlGF_insulin_bombyxin_like"/>
    <property type="match status" value="1"/>
</dbReference>
<dbReference type="Gene3D" id="1.10.100.10">
    <property type="entry name" value="Insulin-like"/>
    <property type="match status" value="1"/>
</dbReference>
<dbReference type="InterPro" id="IPR017097">
    <property type="entry name" value="Bombyxin"/>
</dbReference>
<dbReference type="InterPro" id="IPR016179">
    <property type="entry name" value="Insulin-like"/>
</dbReference>
<dbReference type="InterPro" id="IPR036438">
    <property type="entry name" value="Insulin-like_sf"/>
</dbReference>
<dbReference type="InterPro" id="IPR022353">
    <property type="entry name" value="Insulin_CS"/>
</dbReference>
<dbReference type="InterPro" id="IPR022352">
    <property type="entry name" value="Insulin_family"/>
</dbReference>
<dbReference type="PANTHER" id="PTHR13647:SF4">
    <property type="entry name" value="INSULIN-LIKE PEPTIDE 1-RELATED"/>
    <property type="match status" value="1"/>
</dbReference>
<dbReference type="PANTHER" id="PTHR13647">
    <property type="entry name" value="INSULIN-LIKE PEPTIDE 2-RELATED"/>
    <property type="match status" value="1"/>
</dbReference>
<dbReference type="Pfam" id="PF00049">
    <property type="entry name" value="Insulin"/>
    <property type="match status" value="1"/>
</dbReference>
<dbReference type="PIRSF" id="PIRSF037038">
    <property type="entry name" value="Bombyxin"/>
    <property type="match status" value="1"/>
</dbReference>
<dbReference type="PRINTS" id="PR00276">
    <property type="entry name" value="INSULINFAMLY"/>
</dbReference>
<dbReference type="SMART" id="SM00078">
    <property type="entry name" value="IlGF"/>
    <property type="match status" value="1"/>
</dbReference>
<dbReference type="SUPFAM" id="SSF56994">
    <property type="entry name" value="Insulin-like"/>
    <property type="match status" value="1"/>
</dbReference>
<dbReference type="PROSITE" id="PS00262">
    <property type="entry name" value="INSULIN"/>
    <property type="match status" value="1"/>
</dbReference>
<protein>
    <recommendedName>
        <fullName>Bombyxin A-3 homolog</fullName>
    </recommendedName>
    <component>
        <recommendedName>
            <fullName>Bombyxin A-3 homolog B chain</fullName>
        </recommendedName>
    </component>
    <component>
        <recommendedName>
            <fullName>Bombyxin A-3 homolog A chain</fullName>
        </recommendedName>
    </component>
</protein>
<feature type="signal peptide" evidence="1">
    <location>
        <begin position="1"/>
        <end position="18"/>
    </location>
</feature>
<feature type="peptide" id="PRO_0000016049" description="Bombyxin A-3 homolog B chain">
    <location>
        <begin position="19"/>
        <end position="44"/>
    </location>
</feature>
<feature type="propeptide" id="PRO_0000016050" description="C peptide like">
    <location>
        <begin position="47"/>
        <end position="75"/>
    </location>
</feature>
<feature type="peptide" id="PRO_0000016051" description="Bombyxin A-3 homolog A chain">
    <location>
        <begin position="78"/>
        <end position="98"/>
    </location>
</feature>
<feature type="disulfide bond" description="Interchain (between B and A chains)" evidence="1">
    <location>
        <begin position="26"/>
        <end position="85"/>
    </location>
</feature>
<feature type="disulfide bond" description="Interchain (between B and A chains)" evidence="1">
    <location>
        <begin position="38"/>
        <end position="98"/>
    </location>
</feature>
<feature type="disulfide bond" evidence="1">
    <location>
        <begin position="84"/>
        <end position="89"/>
    </location>
</feature>
<accession>P33720</accession>
<name>BXA3_SAMCY</name>
<proteinExistence type="inferred from homology"/>
<comment type="function">
    <text>Brain peptide responsible for activation of prothoracic glands to produce ecdysone in insects.</text>
</comment>
<comment type="subunit">
    <text>Heterodimer of a B chain and an A chain linked by two disulfide bonds.</text>
</comment>
<comment type="subcellular location">
    <subcellularLocation>
        <location>Secreted</location>
    </subcellularLocation>
</comment>
<comment type="similarity">
    <text evidence="2">Belongs to the insulin family.</text>
</comment>
<gene>
    <name type="primary">SBXA3</name>
</gene>
<reference key="1">
    <citation type="journal article" date="1992" name="Gen. Comp. Endocrinol.">
        <title>Structure and expression of bombyxin-related peptide genes of the moth Samia cynthia ricini.</title>
        <authorList>
            <person name="Kimura-Kawakami M."/>
            <person name="Iwami M."/>
            <person name="Kawakami A."/>
            <person name="Nagasawa H."/>
            <person name="Suzuki A."/>
            <person name="Ishizaki H."/>
        </authorList>
    </citation>
    <scope>NUCLEOTIDE SEQUENCE [GENOMIC DNA]</scope>
</reference>
<evidence type="ECO:0000250" key="1"/>
<evidence type="ECO:0000305" key="2"/>